<organism>
    <name type="scientific">Homo sapiens</name>
    <name type="common">Human</name>
    <dbReference type="NCBI Taxonomy" id="9606"/>
    <lineage>
        <taxon>Eukaryota</taxon>
        <taxon>Metazoa</taxon>
        <taxon>Chordata</taxon>
        <taxon>Craniata</taxon>
        <taxon>Vertebrata</taxon>
        <taxon>Euteleostomi</taxon>
        <taxon>Mammalia</taxon>
        <taxon>Eutheria</taxon>
        <taxon>Euarchontoglires</taxon>
        <taxon>Primates</taxon>
        <taxon>Haplorrhini</taxon>
        <taxon>Catarrhini</taxon>
        <taxon>Hominidae</taxon>
        <taxon>Homo</taxon>
    </lineage>
</organism>
<sequence length="68" mass="7025">MGDQPCASGRSTLPPGNAREAKPPKKRCLLAPRWDYPEGTPNGGSTTLPSAPPPASAGLKSHPPPPEK</sequence>
<accession>A0A0U1RRE5</accession>
<name>NBDY_HUMAN</name>
<proteinExistence type="evidence at protein level"/>
<feature type="chain" id="PRO_0000439205" description="Negative regulator of P-body association">
    <location>
        <begin position="1"/>
        <end position="68"/>
    </location>
</feature>
<feature type="region of interest" description="Disordered" evidence="1">
    <location>
        <begin position="1"/>
        <end position="68"/>
    </location>
</feature>
<feature type="site" description="Required for interaction with EDC4" evidence="2">
    <location>
        <position position="30"/>
    </location>
</feature>
<feature type="site" description="Required for interaction with EDC4" evidence="2">
    <location>
        <position position="34"/>
    </location>
</feature>
<feature type="mutagenesis site" description="No effect on interaction with EDC4." evidence="2">
    <original>K</original>
    <variation>A</variation>
    <location>
        <position position="22"/>
    </location>
</feature>
<feature type="mutagenesis site" description="No effect on interaction with EDC4." evidence="2">
    <original>P</original>
    <variation>A</variation>
    <location>
        <position position="23"/>
    </location>
</feature>
<feature type="mutagenesis site" description="No effect on interaction with EDC4." evidence="2">
    <original>P</original>
    <variation>A</variation>
    <location>
        <position position="24"/>
    </location>
</feature>
<feature type="mutagenesis site" description="No effect on interaction with EDC4." evidence="2">
    <original>K</original>
    <variation>A</variation>
    <location>
        <position position="25"/>
    </location>
</feature>
<feature type="mutagenesis site" description="No effect on interaction with EDC4." evidence="2">
    <original>K</original>
    <variation>A</variation>
    <location>
        <position position="26"/>
    </location>
</feature>
<feature type="mutagenesis site" description="No effect on interaction with EDC4." evidence="2">
    <original>R</original>
    <variation>A</variation>
    <location>
        <position position="27"/>
    </location>
</feature>
<feature type="mutagenesis site" description="No effect on interaction with EDC4." evidence="2">
    <original>C</original>
    <variation>A</variation>
    <location>
        <position position="28"/>
    </location>
</feature>
<feature type="mutagenesis site" description="No effect on interaction with EDC4." evidence="2">
    <original>L</original>
    <variation>A</variation>
    <location>
        <position position="29"/>
    </location>
</feature>
<feature type="mutagenesis site" description="Impaired interaction with EDC4." evidence="2">
    <original>L</original>
    <variation>A</variation>
    <location>
        <position position="30"/>
    </location>
</feature>
<feature type="mutagenesis site" description="No effect on interaction with EDC4." evidence="2">
    <original>P</original>
    <variation>A</variation>
    <location>
        <position position="32"/>
    </location>
</feature>
<feature type="mutagenesis site" description="No effect on interaction with EDC4." evidence="2">
    <original>R</original>
    <variation>A</variation>
    <location>
        <position position="33"/>
    </location>
</feature>
<feature type="mutagenesis site" description="Impaired interaction with EDC4." evidence="2">
    <original>W</original>
    <variation>A</variation>
    <location>
        <position position="34"/>
    </location>
</feature>
<feature type="mutagenesis site" description="No effect on interaction with EDC4." evidence="2">
    <original>D</original>
    <variation>A</variation>
    <location>
        <position position="35"/>
    </location>
</feature>
<feature type="mutagenesis site" description="No effect on interaction with EDC4." evidence="2">
    <original>Y</original>
    <variation>A</variation>
    <location>
        <position position="36"/>
    </location>
</feature>
<feature type="mutagenesis site" description="No effect on interaction with EDC4." evidence="2">
    <original>P</original>
    <variation>A</variation>
    <location>
        <position position="37"/>
    </location>
</feature>
<feature type="mutagenesis site" description="No effect on interaction with EDC4." evidence="2">
    <original>E</original>
    <variation>A</variation>
    <location>
        <position position="38"/>
    </location>
</feature>
<feature type="mutagenesis site" description="No effect on interaction with EDC4." evidence="2">
    <original>G</original>
    <variation>A</variation>
    <location>
        <position position="39"/>
    </location>
</feature>
<feature type="mutagenesis site" description="No effect on interaction with EDC4." evidence="2">
    <original>T</original>
    <variation>A</variation>
    <location>
        <position position="40"/>
    </location>
</feature>
<feature type="mutagenesis site" description="No effect on interaction with EDC4." evidence="2">
    <original>P</original>
    <variation>A</variation>
    <location>
        <position position="41"/>
    </location>
</feature>
<reference evidence="7" key="1">
    <citation type="journal article" date="2005" name="Nature">
        <title>The DNA sequence of the human X chromosome.</title>
        <authorList>
            <person name="Ross M.T."/>
            <person name="Grafham D.V."/>
            <person name="Coffey A.J."/>
            <person name="Scherer S."/>
            <person name="McLay K."/>
            <person name="Muzny D."/>
            <person name="Platzer M."/>
            <person name="Howell G.R."/>
            <person name="Burrows C."/>
            <person name="Bird C.P."/>
            <person name="Frankish A."/>
            <person name="Lovell F.L."/>
            <person name="Howe K.L."/>
            <person name="Ashurst J.L."/>
            <person name="Fulton R.S."/>
            <person name="Sudbrak R."/>
            <person name="Wen G."/>
            <person name="Jones M.C."/>
            <person name="Hurles M.E."/>
            <person name="Andrews T.D."/>
            <person name="Scott C.E."/>
            <person name="Searle S."/>
            <person name="Ramser J."/>
            <person name="Whittaker A."/>
            <person name="Deadman R."/>
            <person name="Carter N.P."/>
            <person name="Hunt S.E."/>
            <person name="Chen R."/>
            <person name="Cree A."/>
            <person name="Gunaratne P."/>
            <person name="Havlak P."/>
            <person name="Hodgson A."/>
            <person name="Metzker M.L."/>
            <person name="Richards S."/>
            <person name="Scott G."/>
            <person name="Steffen D."/>
            <person name="Sodergren E."/>
            <person name="Wheeler D.A."/>
            <person name="Worley K.C."/>
            <person name="Ainscough R."/>
            <person name="Ambrose K.D."/>
            <person name="Ansari-Lari M.A."/>
            <person name="Aradhya S."/>
            <person name="Ashwell R.I."/>
            <person name="Babbage A.K."/>
            <person name="Bagguley C.L."/>
            <person name="Ballabio A."/>
            <person name="Banerjee R."/>
            <person name="Barker G.E."/>
            <person name="Barlow K.F."/>
            <person name="Barrett I.P."/>
            <person name="Bates K.N."/>
            <person name="Beare D.M."/>
            <person name="Beasley H."/>
            <person name="Beasley O."/>
            <person name="Beck A."/>
            <person name="Bethel G."/>
            <person name="Blechschmidt K."/>
            <person name="Brady N."/>
            <person name="Bray-Allen S."/>
            <person name="Bridgeman A.M."/>
            <person name="Brown A.J."/>
            <person name="Brown M.J."/>
            <person name="Bonnin D."/>
            <person name="Bruford E.A."/>
            <person name="Buhay C."/>
            <person name="Burch P."/>
            <person name="Burford D."/>
            <person name="Burgess J."/>
            <person name="Burrill W."/>
            <person name="Burton J."/>
            <person name="Bye J.M."/>
            <person name="Carder C."/>
            <person name="Carrel L."/>
            <person name="Chako J."/>
            <person name="Chapman J.C."/>
            <person name="Chavez D."/>
            <person name="Chen E."/>
            <person name="Chen G."/>
            <person name="Chen Y."/>
            <person name="Chen Z."/>
            <person name="Chinault C."/>
            <person name="Ciccodicola A."/>
            <person name="Clark S.Y."/>
            <person name="Clarke G."/>
            <person name="Clee C.M."/>
            <person name="Clegg S."/>
            <person name="Clerc-Blankenburg K."/>
            <person name="Clifford K."/>
            <person name="Cobley V."/>
            <person name="Cole C.G."/>
            <person name="Conquer J.S."/>
            <person name="Corby N."/>
            <person name="Connor R.E."/>
            <person name="David R."/>
            <person name="Davies J."/>
            <person name="Davis C."/>
            <person name="Davis J."/>
            <person name="Delgado O."/>
            <person name="Deshazo D."/>
            <person name="Dhami P."/>
            <person name="Ding Y."/>
            <person name="Dinh H."/>
            <person name="Dodsworth S."/>
            <person name="Draper H."/>
            <person name="Dugan-Rocha S."/>
            <person name="Dunham A."/>
            <person name="Dunn M."/>
            <person name="Durbin K.J."/>
            <person name="Dutta I."/>
            <person name="Eades T."/>
            <person name="Ellwood M."/>
            <person name="Emery-Cohen A."/>
            <person name="Errington H."/>
            <person name="Evans K.L."/>
            <person name="Faulkner L."/>
            <person name="Francis F."/>
            <person name="Frankland J."/>
            <person name="Fraser A.E."/>
            <person name="Galgoczy P."/>
            <person name="Gilbert J."/>
            <person name="Gill R."/>
            <person name="Gloeckner G."/>
            <person name="Gregory S.G."/>
            <person name="Gribble S."/>
            <person name="Griffiths C."/>
            <person name="Grocock R."/>
            <person name="Gu Y."/>
            <person name="Gwilliam R."/>
            <person name="Hamilton C."/>
            <person name="Hart E.A."/>
            <person name="Hawes A."/>
            <person name="Heath P.D."/>
            <person name="Heitmann K."/>
            <person name="Hennig S."/>
            <person name="Hernandez J."/>
            <person name="Hinzmann B."/>
            <person name="Ho S."/>
            <person name="Hoffs M."/>
            <person name="Howden P.J."/>
            <person name="Huckle E.J."/>
            <person name="Hume J."/>
            <person name="Hunt P.J."/>
            <person name="Hunt A.R."/>
            <person name="Isherwood J."/>
            <person name="Jacob L."/>
            <person name="Johnson D."/>
            <person name="Jones S."/>
            <person name="de Jong P.J."/>
            <person name="Joseph S.S."/>
            <person name="Keenan S."/>
            <person name="Kelly S."/>
            <person name="Kershaw J.K."/>
            <person name="Khan Z."/>
            <person name="Kioschis P."/>
            <person name="Klages S."/>
            <person name="Knights A.J."/>
            <person name="Kosiura A."/>
            <person name="Kovar-Smith C."/>
            <person name="Laird G.K."/>
            <person name="Langford C."/>
            <person name="Lawlor S."/>
            <person name="Leversha M."/>
            <person name="Lewis L."/>
            <person name="Liu W."/>
            <person name="Lloyd C."/>
            <person name="Lloyd D.M."/>
            <person name="Loulseged H."/>
            <person name="Loveland J.E."/>
            <person name="Lovell J.D."/>
            <person name="Lozado R."/>
            <person name="Lu J."/>
            <person name="Lyne R."/>
            <person name="Ma J."/>
            <person name="Maheshwari M."/>
            <person name="Matthews L.H."/>
            <person name="McDowall J."/>
            <person name="McLaren S."/>
            <person name="McMurray A."/>
            <person name="Meidl P."/>
            <person name="Meitinger T."/>
            <person name="Milne S."/>
            <person name="Miner G."/>
            <person name="Mistry S.L."/>
            <person name="Morgan M."/>
            <person name="Morris S."/>
            <person name="Mueller I."/>
            <person name="Mullikin J.C."/>
            <person name="Nguyen N."/>
            <person name="Nordsiek G."/>
            <person name="Nyakatura G."/>
            <person name="O'dell C.N."/>
            <person name="Okwuonu G."/>
            <person name="Palmer S."/>
            <person name="Pandian R."/>
            <person name="Parker D."/>
            <person name="Parrish J."/>
            <person name="Pasternak S."/>
            <person name="Patel D."/>
            <person name="Pearce A.V."/>
            <person name="Pearson D.M."/>
            <person name="Pelan S.E."/>
            <person name="Perez L."/>
            <person name="Porter K.M."/>
            <person name="Ramsey Y."/>
            <person name="Reichwald K."/>
            <person name="Rhodes S."/>
            <person name="Ridler K.A."/>
            <person name="Schlessinger D."/>
            <person name="Schueler M.G."/>
            <person name="Sehra H.K."/>
            <person name="Shaw-Smith C."/>
            <person name="Shen H."/>
            <person name="Sheridan E.M."/>
            <person name="Shownkeen R."/>
            <person name="Skuce C.D."/>
            <person name="Smith M.L."/>
            <person name="Sotheran E.C."/>
            <person name="Steingruber H.E."/>
            <person name="Steward C.A."/>
            <person name="Storey R."/>
            <person name="Swann R.M."/>
            <person name="Swarbreck D."/>
            <person name="Tabor P.E."/>
            <person name="Taudien S."/>
            <person name="Taylor T."/>
            <person name="Teague B."/>
            <person name="Thomas K."/>
            <person name="Thorpe A."/>
            <person name="Timms K."/>
            <person name="Tracey A."/>
            <person name="Trevanion S."/>
            <person name="Tromans A.C."/>
            <person name="d'Urso M."/>
            <person name="Verduzco D."/>
            <person name="Villasana D."/>
            <person name="Waldron L."/>
            <person name="Wall M."/>
            <person name="Wang Q."/>
            <person name="Warren J."/>
            <person name="Warry G.L."/>
            <person name="Wei X."/>
            <person name="West A."/>
            <person name="Whitehead S.L."/>
            <person name="Whiteley M.N."/>
            <person name="Wilkinson J.E."/>
            <person name="Willey D.L."/>
            <person name="Williams G."/>
            <person name="Williams L."/>
            <person name="Williamson A."/>
            <person name="Williamson H."/>
            <person name="Wilming L."/>
            <person name="Woodmansey R.L."/>
            <person name="Wray P.W."/>
            <person name="Yen J."/>
            <person name="Zhang J."/>
            <person name="Zhou J."/>
            <person name="Zoghbi H."/>
            <person name="Zorilla S."/>
            <person name="Buck D."/>
            <person name="Reinhardt R."/>
            <person name="Poustka A."/>
            <person name="Rosenthal A."/>
            <person name="Lehrach H."/>
            <person name="Meindl A."/>
            <person name="Minx P.J."/>
            <person name="Hillier L.W."/>
            <person name="Willard H.F."/>
            <person name="Wilson R.K."/>
            <person name="Waterston R.H."/>
            <person name="Rice C.M."/>
            <person name="Vaudin M."/>
            <person name="Coulson A."/>
            <person name="Nelson D.L."/>
            <person name="Weinstock G."/>
            <person name="Sulston J.E."/>
            <person name="Durbin R.M."/>
            <person name="Hubbard T."/>
            <person name="Gibbs R.A."/>
            <person name="Beck S."/>
            <person name="Rogers J."/>
            <person name="Bentley D.R."/>
        </authorList>
    </citation>
    <scope>NUCLEOTIDE SEQUENCE [LARGE SCALE GENOMIC DNA]</scope>
</reference>
<reference evidence="5" key="2">
    <citation type="submission" date="2005-07" db="EMBL/GenBank/DDBJ databases">
        <authorList>
            <person name="Mural R.J."/>
            <person name="Istrail S."/>
            <person name="Sutton G.G."/>
            <person name="Florea L."/>
            <person name="Halpern A.L."/>
            <person name="Mobarry C.M."/>
            <person name="Lippert R."/>
            <person name="Walenz B."/>
            <person name="Shatkay H."/>
            <person name="Dew I."/>
            <person name="Miller J.R."/>
            <person name="Flanigan M.J."/>
            <person name="Edwards N.J."/>
            <person name="Bolanos R."/>
            <person name="Fasulo D."/>
            <person name="Halldorsson B.V."/>
            <person name="Hannenhalli S."/>
            <person name="Turner R."/>
            <person name="Yooseph S."/>
            <person name="Lu F."/>
            <person name="Nusskern D.R."/>
            <person name="Shue B.C."/>
            <person name="Zheng X.H."/>
            <person name="Zhong F."/>
            <person name="Delcher A.L."/>
            <person name="Huson D.H."/>
            <person name="Kravitz S.A."/>
            <person name="Mouchard L."/>
            <person name="Reinert K."/>
            <person name="Remington K.A."/>
            <person name="Clark A.G."/>
            <person name="Waterman M.S."/>
            <person name="Eichler E.E."/>
            <person name="Adams M.D."/>
            <person name="Hunkapiller M.W."/>
            <person name="Myers E.W."/>
            <person name="Venter J.C."/>
        </authorList>
    </citation>
    <scope>NUCLEOTIDE SEQUENCE [LARGE SCALE GENOMIC DNA]</scope>
</reference>
<reference evidence="4" key="3">
    <citation type="journal article" date="2017" name="Nat. Chem. Biol.">
        <title>A human microprotein that interacts with the mRNA decapping complex.</title>
        <authorList>
            <person name="D'Lima N.G."/>
            <person name="Ma J."/>
            <person name="Winkler L."/>
            <person name="Chu Q."/>
            <person name="Loh K.H."/>
            <person name="Corpuz E.O."/>
            <person name="Budnik B.A."/>
            <person name="Lykke-Andersen J."/>
            <person name="Saghatelian A."/>
            <person name="Slavoff S.A."/>
        </authorList>
    </citation>
    <scope>FUNCTION</scope>
    <scope>INTERACTION WITH DCP1A; DCP2 AND EDC4</scope>
    <scope>SUBCELLULAR LOCATION</scope>
    <scope>MUTAGENESIS OF LYS-22; PRO-23; PRO-24; LYS-25; LYS-26; ARG-27; CYS-28; LEU-29; LEU-30; PRO-32; ARG-33; TRP-34; ASP-35; TYR-36; PRO-37; GLU-38; GLY-39; THR-40 AND PRO-41</scope>
    <scope>IDENTIFICATION BY MASS SPECTROMETRY</scope>
</reference>
<dbReference type="EMBL" id="AL158200">
    <property type="status" value="NOT_ANNOTATED_CDS"/>
    <property type="molecule type" value="Genomic_DNA"/>
</dbReference>
<dbReference type="EMBL" id="AL354865">
    <property type="status" value="NOT_ANNOTATED_CDS"/>
    <property type="molecule type" value="Genomic_DNA"/>
</dbReference>
<dbReference type="EMBL" id="KF459114">
    <property type="status" value="NOT_ANNOTATED_CDS"/>
    <property type="molecule type" value="Genomic_DNA"/>
</dbReference>
<dbReference type="EMBL" id="CH471154">
    <property type="protein sequence ID" value="EAW93234.1"/>
    <property type="molecule type" value="Genomic_DNA"/>
</dbReference>
<dbReference type="CCDS" id="CCDS87751.1"/>
<dbReference type="RefSeq" id="NP_001335058.1">
    <property type="nucleotide sequence ID" value="NM_001348129.2"/>
</dbReference>
<dbReference type="FunCoup" id="A0A0U1RRE5">
    <property type="interactions" value="19"/>
</dbReference>
<dbReference type="IntAct" id="A0A0U1RRE5">
    <property type="interactions" value="16"/>
</dbReference>
<dbReference type="STRING" id="9606.ENSP00000489583"/>
<dbReference type="BioMuta" id="NBDY"/>
<dbReference type="jPOST" id="A0A0U1RRE5"/>
<dbReference type="MassIVE" id="A0A0U1RRE5"/>
<dbReference type="PeptideAtlas" id="A0A0U1RRE5"/>
<dbReference type="Pumba" id="A0A0U1RRE5"/>
<dbReference type="DNASU" id="550643"/>
<dbReference type="Ensembl" id="ENST00000374922.9">
    <property type="protein sequence ID" value="ENSP00000489583.1"/>
    <property type="gene ID" value="ENSG00000204272.13"/>
</dbReference>
<dbReference type="Ensembl" id="ENST00000423617.2">
    <property type="protein sequence ID" value="ENSP00000489486.1"/>
    <property type="gene ID" value="ENSG00000204272.13"/>
</dbReference>
<dbReference type="Ensembl" id="ENST00000637096.1">
    <property type="protein sequence ID" value="ENSP00000490217.1"/>
    <property type="gene ID" value="ENSG00000204272.13"/>
</dbReference>
<dbReference type="GeneID" id="550643"/>
<dbReference type="KEGG" id="hsa:550643"/>
<dbReference type="MANE-Select" id="ENST00000374922.9">
    <property type="protein sequence ID" value="ENSP00000489583.1"/>
    <property type="RefSeq nucleotide sequence ID" value="NM_001348129.2"/>
    <property type="RefSeq protein sequence ID" value="NP_001335058.1"/>
</dbReference>
<dbReference type="AGR" id="HGNC:50713"/>
<dbReference type="CTD" id="550643"/>
<dbReference type="DisGeNET" id="550643"/>
<dbReference type="GeneCards" id="NBDY"/>
<dbReference type="HGNC" id="HGNC:50713">
    <property type="gene designation" value="NBDY"/>
</dbReference>
<dbReference type="HPA" id="ENSG00000204272">
    <property type="expression patterns" value="Low tissue specificity"/>
</dbReference>
<dbReference type="MIM" id="300992">
    <property type="type" value="gene"/>
</dbReference>
<dbReference type="neXtProt" id="NX_A0A0U1RRE5"/>
<dbReference type="OpenTargets" id="ENSG00000204272"/>
<dbReference type="VEuPathDB" id="HostDB:ENSG00000204272"/>
<dbReference type="GeneTree" id="ENSGT00390000004891"/>
<dbReference type="InParanoid" id="A0A0U1RRE5"/>
<dbReference type="OMA" id="DQPCVSG"/>
<dbReference type="OrthoDB" id="9533658at2759"/>
<dbReference type="PAN-GO" id="A0A0U1RRE5">
    <property type="GO annotations" value="2 GO annotations based on evolutionary models"/>
</dbReference>
<dbReference type="PathwayCommons" id="A0A0U1RRE5"/>
<dbReference type="SignaLink" id="A0A0U1RRE5"/>
<dbReference type="BioGRID-ORCS" id="550643">
    <property type="hits" value="0 hits in 4 CRISPR screens"/>
</dbReference>
<dbReference type="CD-CODE" id="232F8A39">
    <property type="entry name" value="P-body"/>
</dbReference>
<dbReference type="ChiTaRS" id="NBDY">
    <property type="organism name" value="human"/>
</dbReference>
<dbReference type="Pharos" id="A0A0U1RRE5">
    <property type="development level" value="Tbio"/>
</dbReference>
<dbReference type="PRO" id="PR:A0A0U1RRE5"/>
<dbReference type="Proteomes" id="UP000005640">
    <property type="component" value="Chromosome X"/>
</dbReference>
<dbReference type="RNAct" id="A0A0U1RRE5">
    <property type="molecule type" value="protein"/>
</dbReference>
<dbReference type="Bgee" id="ENSG00000204272">
    <property type="expression patterns" value="Expressed in kidney epithelium and 190 other cell types or tissues"/>
</dbReference>
<dbReference type="ExpressionAtlas" id="A0A0U1RRE5">
    <property type="expression patterns" value="baseline and differential"/>
</dbReference>
<dbReference type="GO" id="GO:0000932">
    <property type="term" value="C:P-body"/>
    <property type="evidence" value="ECO:0000314"/>
    <property type="project" value="UniProtKB"/>
</dbReference>
<dbReference type="GO" id="GO:0006397">
    <property type="term" value="P:mRNA processing"/>
    <property type="evidence" value="ECO:0007669"/>
    <property type="project" value="UniProtKB-KW"/>
</dbReference>
<dbReference type="GO" id="GO:0010607">
    <property type="term" value="P:negative regulation of cytoplasmic mRNA processing body assembly"/>
    <property type="evidence" value="ECO:0000314"/>
    <property type="project" value="UniProtKB"/>
</dbReference>
<dbReference type="GO" id="GO:0000956">
    <property type="term" value="P:nuclear-transcribed mRNA catabolic process"/>
    <property type="evidence" value="ECO:0000314"/>
    <property type="project" value="UniProtKB"/>
</dbReference>
<dbReference type="CDD" id="cd20243">
    <property type="entry name" value="NoBody"/>
    <property type="match status" value="1"/>
</dbReference>
<dbReference type="InterPro" id="IPR047852">
    <property type="entry name" value="NoBody"/>
</dbReference>
<dbReference type="Pfam" id="PF21949">
    <property type="entry name" value="NoBody"/>
    <property type="match status" value="1"/>
</dbReference>
<comment type="function">
    <text evidence="2">Promotes dispersal of P-body components and is likely to play a role in the mRNA decapping process.</text>
</comment>
<comment type="subunit">
    <text evidence="2">Interacts with mRNA decapping proteins DCP1A, DCP2 and EDC4.</text>
</comment>
<comment type="interaction">
    <interactant intactId="EBI-27058088">
        <id>A0A0U1RRE5</id>
    </interactant>
    <interactant intactId="EBI-374238">
        <id>Q9NPI6</id>
        <label>DCP1A</label>
    </interactant>
    <organismsDiffer>false</organismsDiffer>
    <experiments>4</experiments>
</comment>
<comment type="interaction">
    <interactant intactId="EBI-27058088">
        <id>A0A0U1RRE5</id>
    </interactant>
    <interactant intactId="EBI-1006038">
        <id>Q6P2E9</id>
        <label>EDC4</label>
    </interactant>
    <organismsDiffer>false</organismsDiffer>
    <experiments>11</experiments>
</comment>
<comment type="subcellular location">
    <subcellularLocation>
        <location evidence="2">Cytoplasm</location>
        <location evidence="2">P-body</location>
    </subcellularLocation>
    <text evidence="2">Localizes to P-bodies at low concentrations without dissociating them.</text>
</comment>
<comment type="caution">
    <text evidence="2">Was previously thought to be non-coding but has been shown to be translated and functional.</text>
</comment>
<protein>
    <recommendedName>
        <fullName evidence="6">Negative regulator of P-body association</fullName>
    </recommendedName>
    <alternativeName>
        <fullName evidence="3">P-body dissociating protein</fullName>
    </alternativeName>
    <alternativeName>
        <fullName evidence="3">Protein NoBody</fullName>
    </alternativeName>
</protein>
<evidence type="ECO:0000256" key="1">
    <source>
        <dbReference type="SAM" id="MobiDB-lite"/>
    </source>
</evidence>
<evidence type="ECO:0000269" key="2">
    <source>
    </source>
</evidence>
<evidence type="ECO:0000303" key="3">
    <source>
    </source>
</evidence>
<evidence type="ECO:0000305" key="4"/>
<evidence type="ECO:0000312" key="5">
    <source>
        <dbReference type="EMBL" id="EAW93234.1"/>
    </source>
</evidence>
<evidence type="ECO:0000312" key="6">
    <source>
        <dbReference type="HGNC" id="HGNC:50713"/>
    </source>
</evidence>
<evidence type="ECO:0000312" key="7">
    <source>
        <dbReference type="Proteomes" id="UP000005640"/>
    </source>
</evidence>
<keyword id="KW-0963">Cytoplasm</keyword>
<keyword id="KW-0507">mRNA processing</keyword>
<keyword id="KW-1267">Proteomics identification</keyword>
<keyword id="KW-1185">Reference proteome</keyword>
<gene>
    <name evidence="6" type="primary">NBDY</name>
    <name evidence="6" type="synonym">LINC01420</name>
</gene>